<reference key="1">
    <citation type="submission" date="2005-09" db="EMBL/GenBank/DDBJ databases">
        <title>The chloroplast genome of mulberry: structural features and comparative analysis.</title>
        <authorList>
            <person name="Ravi V."/>
            <person name="Khurana J.P."/>
            <person name="Tyagi A.K."/>
            <person name="Khurana P."/>
        </authorList>
    </citation>
    <scope>NUCLEOTIDE SEQUENCE [LARGE SCALE GENOMIC DNA]</scope>
    <source>
        <strain>cv. K2</strain>
    </source>
</reference>
<sequence length="510" mass="56530">MIWHVQNENFILDSTRIFMKAFHLLLFDGSFIFPECILIFGLILLLMIDSTSDQKDIPWLYFISSTSLVMSITALLFRWREEPMISFSGNFQTNNFNEIFQFLILLCSTLCIPLSVEYIECTEMAITEFLLFVLTATLGGMFLCGANDLITIFVAPECFSLCSYLLSGYTKKDVRSNEATTKYLLMGGASSSILVHGFSWLYGSSGGEIELQEIVNGLINTQMYNSPGISIALIFITVGIGFKLSPAPSHQWTPDVYEGSPTPVVAFLSVTSKVAASASATRIFDIPFYFSSNEWHLLLEILAILSMILGNLIAITQTSMKRMLAYSSIGQIGYVIIGIIVGDSNGGYASMITYMLFYISMNLGTFACIVSFGLRTGTDNIRDYAGLYTKDAFLALSLALCLLSLGGLPPLAGFFGKLHLFWCGWQAGLYFLVSIGLLTSVVSIYYYLKIIKLLMTGRNQEITPHVQNYRRSPLRSNNSIELSMIVCVIASTIPGISMNPIIEIAQDTLF</sequence>
<accession>P0CC93</accession>
<accession>Q09WV8</accession>
<comment type="function">
    <text evidence="1">NDH shuttles electrons from NAD(P)H:plastoquinone, via FMN and iron-sulfur (Fe-S) centers, to quinones in the photosynthetic chain and possibly in a chloroplast respiratory chain. The immediate electron acceptor for the enzyme in this species is believed to be plastoquinone. Couples the redox reaction to proton translocation, and thus conserves the redox energy in a proton gradient.</text>
</comment>
<comment type="catalytic activity">
    <reaction evidence="1">
        <text>a plastoquinone + NADH + (n+1) H(+)(in) = a plastoquinol + NAD(+) + n H(+)(out)</text>
        <dbReference type="Rhea" id="RHEA:42608"/>
        <dbReference type="Rhea" id="RHEA-COMP:9561"/>
        <dbReference type="Rhea" id="RHEA-COMP:9562"/>
        <dbReference type="ChEBI" id="CHEBI:15378"/>
        <dbReference type="ChEBI" id="CHEBI:17757"/>
        <dbReference type="ChEBI" id="CHEBI:57540"/>
        <dbReference type="ChEBI" id="CHEBI:57945"/>
        <dbReference type="ChEBI" id="CHEBI:62192"/>
    </reaction>
</comment>
<comment type="catalytic activity">
    <reaction evidence="1">
        <text>a plastoquinone + NADPH + (n+1) H(+)(in) = a plastoquinol + NADP(+) + n H(+)(out)</text>
        <dbReference type="Rhea" id="RHEA:42612"/>
        <dbReference type="Rhea" id="RHEA-COMP:9561"/>
        <dbReference type="Rhea" id="RHEA-COMP:9562"/>
        <dbReference type="ChEBI" id="CHEBI:15378"/>
        <dbReference type="ChEBI" id="CHEBI:17757"/>
        <dbReference type="ChEBI" id="CHEBI:57783"/>
        <dbReference type="ChEBI" id="CHEBI:58349"/>
        <dbReference type="ChEBI" id="CHEBI:62192"/>
    </reaction>
</comment>
<comment type="subunit">
    <text evidence="1">NDH is composed of at least 16 different subunits, 5 of which are encoded in the nucleus.</text>
</comment>
<comment type="subcellular location">
    <subcellularLocation>
        <location evidence="1">Plastid</location>
        <location evidence="1">Chloroplast thylakoid membrane</location>
        <topology evidence="1">Multi-pass membrane protein</topology>
    </subcellularLocation>
</comment>
<comment type="similarity">
    <text evidence="1">Belongs to the complex I subunit 2 family.</text>
</comment>
<gene>
    <name evidence="1" type="primary">ndhB2</name>
    <name type="synonym">ndhB-B</name>
    <name type="ordered locus">MoinCp081</name>
</gene>
<feature type="chain" id="PRO_0000391284" description="NAD(P)H-quinone oxidoreductase subunit 2 B, chloroplastic">
    <location>
        <begin position="1"/>
        <end position="510"/>
    </location>
</feature>
<feature type="transmembrane region" description="Helical" evidence="1">
    <location>
        <begin position="24"/>
        <end position="44"/>
    </location>
</feature>
<feature type="transmembrane region" description="Helical" evidence="1">
    <location>
        <begin position="57"/>
        <end position="77"/>
    </location>
</feature>
<feature type="transmembrane region" description="Helical" evidence="1">
    <location>
        <begin position="99"/>
        <end position="119"/>
    </location>
</feature>
<feature type="transmembrane region" description="Helical" evidence="1">
    <location>
        <begin position="124"/>
        <end position="144"/>
    </location>
</feature>
<feature type="transmembrane region" description="Helical" evidence="1">
    <location>
        <begin position="149"/>
        <end position="169"/>
    </location>
</feature>
<feature type="transmembrane region" description="Helical" evidence="1">
    <location>
        <begin position="183"/>
        <end position="203"/>
    </location>
</feature>
<feature type="transmembrane region" description="Helical" evidence="1">
    <location>
        <begin position="227"/>
        <end position="247"/>
    </location>
</feature>
<feature type="transmembrane region" description="Helical" evidence="1">
    <location>
        <begin position="295"/>
        <end position="315"/>
    </location>
</feature>
<feature type="transmembrane region" description="Helical" evidence="1">
    <location>
        <begin position="323"/>
        <end position="343"/>
    </location>
</feature>
<feature type="transmembrane region" description="Helical" evidence="1">
    <location>
        <begin position="354"/>
        <end position="374"/>
    </location>
</feature>
<feature type="transmembrane region" description="Helical" evidence="1">
    <location>
        <begin position="392"/>
        <end position="412"/>
    </location>
</feature>
<feature type="transmembrane region" description="Helical" evidence="1">
    <location>
        <begin position="418"/>
        <end position="438"/>
    </location>
</feature>
<feature type="transmembrane region" description="Helical" evidence="1">
    <location>
        <begin position="482"/>
        <end position="502"/>
    </location>
</feature>
<evidence type="ECO:0000255" key="1">
    <source>
        <dbReference type="HAMAP-Rule" id="MF_00445"/>
    </source>
</evidence>
<name>NU2C2_MORIN</name>
<proteinExistence type="inferred from homology"/>
<dbReference type="EC" id="7.1.1.-" evidence="1"/>
<dbReference type="EMBL" id="DQ226511">
    <property type="protein sequence ID" value="ABB21016.1"/>
    <property type="molecule type" value="Genomic_DNA"/>
</dbReference>
<dbReference type="SMR" id="P0CC93"/>
<dbReference type="GO" id="GO:0009535">
    <property type="term" value="C:chloroplast thylakoid membrane"/>
    <property type="evidence" value="ECO:0007669"/>
    <property type="project" value="UniProtKB-SubCell"/>
</dbReference>
<dbReference type="GO" id="GO:0008137">
    <property type="term" value="F:NADH dehydrogenase (ubiquinone) activity"/>
    <property type="evidence" value="ECO:0007669"/>
    <property type="project" value="InterPro"/>
</dbReference>
<dbReference type="GO" id="GO:0048038">
    <property type="term" value="F:quinone binding"/>
    <property type="evidence" value="ECO:0007669"/>
    <property type="project" value="UniProtKB-KW"/>
</dbReference>
<dbReference type="GO" id="GO:0042773">
    <property type="term" value="P:ATP synthesis coupled electron transport"/>
    <property type="evidence" value="ECO:0007669"/>
    <property type="project" value="InterPro"/>
</dbReference>
<dbReference type="GO" id="GO:0019684">
    <property type="term" value="P:photosynthesis, light reaction"/>
    <property type="evidence" value="ECO:0007669"/>
    <property type="project" value="UniProtKB-UniRule"/>
</dbReference>
<dbReference type="HAMAP" id="MF_00445">
    <property type="entry name" value="NDH1_NuoN_1"/>
    <property type="match status" value="1"/>
</dbReference>
<dbReference type="InterPro" id="IPR010096">
    <property type="entry name" value="NADH-Q_OxRdtase_suN/2"/>
</dbReference>
<dbReference type="InterPro" id="IPR001750">
    <property type="entry name" value="ND/Mrp_TM"/>
</dbReference>
<dbReference type="InterPro" id="IPR045693">
    <property type="entry name" value="Ndh2_N"/>
</dbReference>
<dbReference type="NCBIfam" id="TIGR01770">
    <property type="entry name" value="NDH_I_N"/>
    <property type="match status" value="1"/>
</dbReference>
<dbReference type="NCBIfam" id="NF002701">
    <property type="entry name" value="PRK02504.1"/>
    <property type="match status" value="1"/>
</dbReference>
<dbReference type="PANTHER" id="PTHR22773">
    <property type="entry name" value="NADH DEHYDROGENASE"/>
    <property type="match status" value="1"/>
</dbReference>
<dbReference type="Pfam" id="PF19530">
    <property type="entry name" value="Ndh2_N"/>
    <property type="match status" value="1"/>
</dbReference>
<dbReference type="Pfam" id="PF00361">
    <property type="entry name" value="Proton_antipo_M"/>
    <property type="match status" value="1"/>
</dbReference>
<dbReference type="PRINTS" id="PR01434">
    <property type="entry name" value="NADHDHGNASE5"/>
</dbReference>
<protein>
    <recommendedName>
        <fullName evidence="1">NAD(P)H-quinone oxidoreductase subunit 2 B, chloroplastic</fullName>
        <ecNumber evidence="1">7.1.1.-</ecNumber>
    </recommendedName>
    <alternativeName>
        <fullName evidence="1">NAD(P)H dehydrogenase, subunit 2 B</fullName>
    </alternativeName>
    <alternativeName>
        <fullName evidence="1">NADH-plastoquinone oxidoreductase subunit 2 B</fullName>
    </alternativeName>
</protein>
<keyword id="KW-0150">Chloroplast</keyword>
<keyword id="KW-0472">Membrane</keyword>
<keyword id="KW-0520">NAD</keyword>
<keyword id="KW-0521">NADP</keyword>
<keyword id="KW-0934">Plastid</keyword>
<keyword id="KW-0618">Plastoquinone</keyword>
<keyword id="KW-0874">Quinone</keyword>
<keyword id="KW-0793">Thylakoid</keyword>
<keyword id="KW-1278">Translocase</keyword>
<keyword id="KW-0812">Transmembrane</keyword>
<keyword id="KW-1133">Transmembrane helix</keyword>
<keyword id="KW-0813">Transport</keyword>
<geneLocation type="chloroplast"/>
<organism>
    <name type="scientific">Morus indica</name>
    <name type="common">Mulberry</name>
    <dbReference type="NCBI Taxonomy" id="248361"/>
    <lineage>
        <taxon>Eukaryota</taxon>
        <taxon>Viridiplantae</taxon>
        <taxon>Streptophyta</taxon>
        <taxon>Embryophyta</taxon>
        <taxon>Tracheophyta</taxon>
        <taxon>Spermatophyta</taxon>
        <taxon>Magnoliopsida</taxon>
        <taxon>eudicotyledons</taxon>
        <taxon>Gunneridae</taxon>
        <taxon>Pentapetalae</taxon>
        <taxon>rosids</taxon>
        <taxon>fabids</taxon>
        <taxon>Rosales</taxon>
        <taxon>Moraceae</taxon>
        <taxon>Moreae</taxon>
        <taxon>Morus</taxon>
    </lineage>
</organism>